<proteinExistence type="evidence at protein level"/>
<keyword id="KW-0002">3D-structure</keyword>
<keyword id="KW-0997">Cell inner membrane</keyword>
<keyword id="KW-1003">Cell membrane</keyword>
<keyword id="KW-0903">Direct protein sequencing</keyword>
<keyword id="KW-0418">Kinase</keyword>
<keyword id="KW-0472">Membrane</keyword>
<keyword id="KW-0597">Phosphoprotein</keyword>
<keyword id="KW-0598">Phosphotransferase system</keyword>
<keyword id="KW-1185">Reference proteome</keyword>
<keyword id="KW-0762">Sugar transport</keyword>
<keyword id="KW-0808">Transferase</keyword>
<keyword id="KW-0812">Transmembrane</keyword>
<keyword id="KW-1133">Transmembrane helix</keyword>
<keyword id="KW-0813">Transport</keyword>
<evidence type="ECO:0000255" key="1"/>
<evidence type="ECO:0000255" key="2">
    <source>
        <dbReference type="PROSITE-ProRule" id="PRU00421"/>
    </source>
</evidence>
<evidence type="ECO:0000255" key="3">
    <source>
        <dbReference type="PROSITE-ProRule" id="PRU00426"/>
    </source>
</evidence>
<evidence type="ECO:0000269" key="4">
    <source>
    </source>
</evidence>
<evidence type="ECO:0000269" key="5">
    <source>
    </source>
</evidence>
<evidence type="ECO:0000269" key="6">
    <source>
    </source>
</evidence>
<evidence type="ECO:0000269" key="7">
    <source>
    </source>
</evidence>
<evidence type="ECO:0000269" key="8">
    <source>
    </source>
</evidence>
<evidence type="ECO:0000269" key="9">
    <source>
    </source>
</evidence>
<evidence type="ECO:0000269" key="10">
    <source>
    </source>
</evidence>
<evidence type="ECO:0000269" key="11">
    <source>
    </source>
</evidence>
<evidence type="ECO:0000269" key="12">
    <source>
    </source>
</evidence>
<evidence type="ECO:0000269" key="13">
    <source>
    </source>
</evidence>
<evidence type="ECO:0000269" key="14">
    <source>
    </source>
</evidence>
<evidence type="ECO:0000269" key="15">
    <source>
    </source>
</evidence>
<evidence type="ECO:0000269" key="16">
    <source>
    </source>
</evidence>
<evidence type="ECO:0000269" key="17">
    <source>
    </source>
</evidence>
<evidence type="ECO:0000303" key="18">
    <source>
    </source>
</evidence>
<evidence type="ECO:0000303" key="19">
    <source>
    </source>
</evidence>
<evidence type="ECO:0000305" key="20">
    <source>
    </source>
</evidence>
<evidence type="ECO:0000305" key="21">
    <source>
    </source>
</evidence>
<evidence type="ECO:0000305" key="22">
    <source>
    </source>
</evidence>
<evidence type="ECO:0000305" key="23">
    <source>
    </source>
</evidence>
<evidence type="ECO:0000305" key="24">
    <source>
    </source>
</evidence>
<evidence type="ECO:0000305" key="25">
    <source>
    </source>
</evidence>
<evidence type="ECO:0007829" key="26">
    <source>
        <dbReference type="PDB" id="3BP3"/>
    </source>
</evidence>
<evidence type="ECO:0007829" key="27">
    <source>
        <dbReference type="PDB" id="8QSR"/>
    </source>
</evidence>
<evidence type="ECO:0007829" key="28">
    <source>
        <dbReference type="PDB" id="8QST"/>
    </source>
</evidence>
<accession>P69786</accession>
<accession>P05053</accession>
<organism>
    <name type="scientific">Escherichia coli (strain K12)</name>
    <dbReference type="NCBI Taxonomy" id="83333"/>
    <lineage>
        <taxon>Bacteria</taxon>
        <taxon>Pseudomonadati</taxon>
        <taxon>Pseudomonadota</taxon>
        <taxon>Gammaproteobacteria</taxon>
        <taxon>Enterobacterales</taxon>
        <taxon>Enterobacteriaceae</taxon>
        <taxon>Escherichia</taxon>
    </lineage>
</organism>
<protein>
    <recommendedName>
        <fullName evidence="18">PTS system glucose-specific EIICB component</fullName>
    </recommendedName>
    <alternativeName>
        <fullName evidence="18">EIICB-Glc</fullName>
        <shortName evidence="18">EII-Glc</shortName>
    </alternativeName>
    <domain>
        <recommendedName>
            <fullName evidence="18">Glucose permease IIC component</fullName>
        </recommendedName>
        <alternativeName>
            <fullName evidence="18">PTS system glucose-specific EIIC component</fullName>
        </alternativeName>
    </domain>
    <domain>
        <recommendedName>
            <fullName evidence="19">Glucose-specific phosphotransferase enzyme IIB component</fullName>
            <ecNumber evidence="15">2.7.1.199</ecNumber>
        </recommendedName>
        <alternativeName>
            <fullName evidence="19">PTS system glucose-specific EIIB component</fullName>
        </alternativeName>
    </domain>
</protein>
<comment type="function">
    <text evidence="4 5 6 7 12 15">The phosphoenolpyruvate-dependent sugar phosphotransferase system (sugar PTS), a major carbohydrate active transport system, catalyzes the phosphorylation of incoming sugar substrates concomitantly with their translocation across the cell membrane. The enzyme II complex composed of PtsG and Crr is involved in glucose transport (PubMed:10562420, PubMed:3129430). Also functions as a chemoreceptor monitoring the environment for changes in sugar concentration and an effector modulating the activity of the transcriptional repressor Mlc (PubMed:18319344). In the presence of glucose in the medium, the dephosphorylated form of PtsG can interact with Mlc, leading to sequestration of Mlc in the inner membrane and inhibition of its repressor activity (PubMed:11032803, PubMed:11157755, PubMed:12529317, PubMed:18319344).</text>
</comment>
<comment type="function">
    <text evidence="13 23">(Microbial infection) Probably transports the toxic C-terminal region of CdiA from E.coli strains NC101 and 3006 across the inner membrane to the cytoplasm, where CdiA degrades specific tRNAs. Toxin transport is strain-specific, mutations in this gene do not confer resistance to several other tested CdiA toxins (PubMed:26305955). Probably also serves as the inner membrane receptor for CdiA-STECO31 from E.coli strain STEC_O31 (Probable).</text>
</comment>
<comment type="catalytic activity">
    <reaction evidence="15">
        <text>N(pros)-phospho-L-histidyl-[protein] + D-glucose(out) = D-glucose 6-phosphate(in) + L-histidyl-[protein]</text>
        <dbReference type="Rhea" id="RHEA:33367"/>
        <dbReference type="Rhea" id="RHEA-COMP:9745"/>
        <dbReference type="Rhea" id="RHEA-COMP:9746"/>
        <dbReference type="ChEBI" id="CHEBI:4167"/>
        <dbReference type="ChEBI" id="CHEBI:29979"/>
        <dbReference type="ChEBI" id="CHEBI:61548"/>
        <dbReference type="ChEBI" id="CHEBI:64837"/>
        <dbReference type="EC" id="2.7.1.199"/>
    </reaction>
</comment>
<comment type="activity regulation">
    <text evidence="11">Transporter activity may be inhibited by SgrT.</text>
</comment>
<comment type="subunit">
    <text evidence="4 5 6 7 8 12 24">Homodimer (Probable) (PubMed:10562420, PubMed:12716891, PubMed:18319344). The dephosphorylated form interacts with the Mlc transcriptional repressor (PubMed:11032803, PubMed:11157755, PubMed:12529317, PubMed:18319344). Mlc and the EIIB domain form a complex with the 1:1 stoichiometry (PubMed:18319344).</text>
</comment>
<comment type="interaction">
    <interactant intactId="EBI-903497">
        <id>P69786</id>
    </interactant>
    <interactant intactId="EBI-1116104">
        <id>P50456</id>
        <label>mlc</label>
    </interactant>
    <organismsDiffer>false</organismsDiffer>
    <experiments>3</experiments>
</comment>
<comment type="subcellular location">
    <subcellularLocation>
        <location evidence="3 10 25">Cell inner membrane</location>
        <topology evidence="3 21">Multi-pass membrane protein</topology>
    </subcellularLocation>
</comment>
<comment type="induction">
    <text evidence="9 11 17">Induced by glucose (PubMed:9781886). Expression is positively regulated by the cAMP-CRP complex and negatively regulated by the Mlc transcriptional repressor (PubMed:9781886). Mlc and CRP-cAMP bind independently to the ptsG promoter region, and the action of Mlc is dominant over the cAMP-CRP action (PubMed:9781886). The ptsG transcript is degraded under conditions of glucose-phosphate stress (due to intracellular accumulation of glucose-6-phosphate caused by disruption of glycolytic flux), or in the presence of (toxic) non-metabolizable glucose phosphate analogs due to hybridization with the small RNA sgrS (originally known as ryaA). This hybridization is sufficient to repress mRNA translation. The hybrid is subsequently degraded by RNase E. This reduces the quantity of transporter and relieves glucose phosphate stress (PubMed:15522088, PubMed:16549791).</text>
</comment>
<comment type="domain">
    <text evidence="2">The EIIB domain is phosphorylated by phospho-EIIA on a cysteinyl or histidyl residue, depending on the transported sugar. Then, it transfers the phosphoryl group to the sugar substrate concomitantly with the sugar uptake processed by the EIIC domain.</text>
</comment>
<comment type="domain">
    <text evidence="3">The EIIC domain forms the PTS system translocation channel and contains the specific substrate-binding site.</text>
</comment>
<comment type="domain">
    <text evidence="5 6 7">Initial studies suggest that binding to Mlc requires the EIIB domain and the EIIC-B junction region, or that the soluble EIIB domain is sufficient (PubMed:11032803, PubMed:11157755). A more recent study shows that the soluble EIIB domain is sufficient to interact with Mlc but only when EIIB is attached to the membrane by a protein anchor (PubMed:12529317).</text>
</comment>
<comment type="disruption phenotype">
    <text evidence="13 14">Disruption confers resistance to cellular contact-dependent growth inhibition (CDI) CdiA of E.coli strains NC101 and 3006, but not to several other tested CdiA toxins (PubMed:26305955). Disruption confers resistance to cellular contact-dependent growth inhibition (CDI) CdiA-STECO31 of E.coli strain STEC_O31 (PubMed:28351921).</text>
</comment>
<dbReference type="EC" id="2.7.1.199" evidence="15"/>
<dbReference type="EMBL" id="J02618">
    <property type="protein sequence ID" value="AAA24437.1"/>
    <property type="molecule type" value="Genomic_DNA"/>
</dbReference>
<dbReference type="EMBL" id="U00096">
    <property type="protein sequence ID" value="AAC74185.1"/>
    <property type="molecule type" value="Genomic_DNA"/>
</dbReference>
<dbReference type="EMBL" id="AP009048">
    <property type="protein sequence ID" value="BAA35908.1"/>
    <property type="molecule type" value="Genomic_DNA"/>
</dbReference>
<dbReference type="PIR" id="A25336">
    <property type="entry name" value="WQEC2G"/>
</dbReference>
<dbReference type="RefSeq" id="NP_415619.1">
    <property type="nucleotide sequence ID" value="NC_000913.3"/>
</dbReference>
<dbReference type="RefSeq" id="WP_000475719.1">
    <property type="nucleotide sequence ID" value="NZ_STEB01000016.1"/>
</dbReference>
<dbReference type="PDB" id="1IBA">
    <property type="method" value="NMR"/>
    <property type="chains" value="A=391-476"/>
</dbReference>
<dbReference type="PDB" id="1O2F">
    <property type="method" value="NMR"/>
    <property type="chains" value="B=387-476"/>
</dbReference>
<dbReference type="PDB" id="3BP3">
    <property type="method" value="X-ray"/>
    <property type="resolution" value="1.65 A"/>
    <property type="chains" value="A/B=396-477"/>
</dbReference>
<dbReference type="PDB" id="3BP8">
    <property type="method" value="X-ray"/>
    <property type="resolution" value="2.85 A"/>
    <property type="chains" value="C/D=401-475"/>
</dbReference>
<dbReference type="PDB" id="8QSR">
    <property type="method" value="EM"/>
    <property type="resolution" value="2.56 A"/>
    <property type="chains" value="A/B=1-477"/>
</dbReference>
<dbReference type="PDB" id="8QST">
    <property type="method" value="EM"/>
    <property type="resolution" value="2.89 A"/>
    <property type="chains" value="A/B=1-477"/>
</dbReference>
<dbReference type="PDBsum" id="1IBA"/>
<dbReference type="PDBsum" id="1O2F"/>
<dbReference type="PDBsum" id="3BP3"/>
<dbReference type="PDBsum" id="3BP8"/>
<dbReference type="PDBsum" id="8QSR"/>
<dbReference type="PDBsum" id="8QST"/>
<dbReference type="EMDB" id="EMD-18640"/>
<dbReference type="EMDB" id="EMD-18641"/>
<dbReference type="SMR" id="P69786"/>
<dbReference type="BioGRID" id="4260940">
    <property type="interactions" value="16"/>
</dbReference>
<dbReference type="ComplexPortal" id="CPX-2242">
    <property type="entry name" value="mlc-EIIB transcriptional regulator complex"/>
</dbReference>
<dbReference type="ComplexPortal" id="CPX-5943">
    <property type="entry name" value="Glucose-specific enzyme II complex"/>
</dbReference>
<dbReference type="DIP" id="DIP-29833N"/>
<dbReference type="FunCoup" id="P69786">
    <property type="interactions" value="140"/>
</dbReference>
<dbReference type="IntAct" id="P69786">
    <property type="interactions" value="3"/>
</dbReference>
<dbReference type="STRING" id="511145.b1101"/>
<dbReference type="MoonProt" id="P69786"/>
<dbReference type="TCDB" id="4.A.1.1.1">
    <property type="family name" value="the pts glucose-glucoside (glc) family"/>
</dbReference>
<dbReference type="iPTMnet" id="P69786"/>
<dbReference type="jPOST" id="P69786"/>
<dbReference type="PaxDb" id="511145-b1101"/>
<dbReference type="EnsemblBacteria" id="AAC74185">
    <property type="protein sequence ID" value="AAC74185"/>
    <property type="gene ID" value="b1101"/>
</dbReference>
<dbReference type="GeneID" id="93776307"/>
<dbReference type="GeneID" id="945651"/>
<dbReference type="KEGG" id="ecj:JW1087"/>
<dbReference type="KEGG" id="eco:b1101"/>
<dbReference type="KEGG" id="ecoc:C3026_06650"/>
<dbReference type="PATRIC" id="fig|1411691.4.peg.1167"/>
<dbReference type="EchoBASE" id="EB0780"/>
<dbReference type="eggNOG" id="COG1263">
    <property type="taxonomic scope" value="Bacteria"/>
</dbReference>
<dbReference type="eggNOG" id="COG1264">
    <property type="taxonomic scope" value="Bacteria"/>
</dbReference>
<dbReference type="HOGENOM" id="CLU_012312_1_0_6"/>
<dbReference type="InParanoid" id="P69786"/>
<dbReference type="OMA" id="AWAFNRF"/>
<dbReference type="OrthoDB" id="7571469at2"/>
<dbReference type="PhylomeDB" id="P69786"/>
<dbReference type="BioCyc" id="EcoCyc:PTSG-MONOMER"/>
<dbReference type="BioCyc" id="MetaCyc:PTSG-MONOMER"/>
<dbReference type="BRENDA" id="2.7.1.199">
    <property type="organism ID" value="2026"/>
</dbReference>
<dbReference type="EvolutionaryTrace" id="P69786"/>
<dbReference type="PRO" id="PR:P69786"/>
<dbReference type="Proteomes" id="UP000000625">
    <property type="component" value="Chromosome"/>
</dbReference>
<dbReference type="GO" id="GO:0016020">
    <property type="term" value="C:membrane"/>
    <property type="evidence" value="ECO:0000303"/>
    <property type="project" value="ComplexPortal"/>
</dbReference>
<dbReference type="GO" id="GO:0005886">
    <property type="term" value="C:plasma membrane"/>
    <property type="evidence" value="ECO:0000314"/>
    <property type="project" value="EcoCyc"/>
</dbReference>
<dbReference type="GO" id="GO:1902495">
    <property type="term" value="C:transmembrane transporter complex"/>
    <property type="evidence" value="ECO:0000353"/>
    <property type="project" value="ComplexPortal"/>
</dbReference>
<dbReference type="GO" id="GO:0055056">
    <property type="term" value="F:D-glucose transmembrane transporter activity"/>
    <property type="evidence" value="ECO:0007669"/>
    <property type="project" value="InterPro"/>
</dbReference>
<dbReference type="GO" id="GO:0016301">
    <property type="term" value="F:kinase activity"/>
    <property type="evidence" value="ECO:0007669"/>
    <property type="project" value="UniProtKB-KW"/>
</dbReference>
<dbReference type="GO" id="GO:0008982">
    <property type="term" value="F:protein-N(PI)-phosphohistidine-sugar phosphotransferase activity"/>
    <property type="evidence" value="ECO:0007669"/>
    <property type="project" value="InterPro"/>
</dbReference>
<dbReference type="GO" id="GO:0090564">
    <property type="term" value="F:protein-phosphocysteine-glucose phosphotransferase system transporter activity"/>
    <property type="evidence" value="ECO:0000314"/>
    <property type="project" value="EcoCyc"/>
</dbReference>
<dbReference type="GO" id="GO:0098708">
    <property type="term" value="P:D-glucose import across plasma membrane"/>
    <property type="evidence" value="ECO:0000314"/>
    <property type="project" value="EcoCyc"/>
</dbReference>
<dbReference type="GO" id="GO:1904659">
    <property type="term" value="P:D-glucose transmembrane transport"/>
    <property type="evidence" value="ECO:0000315"/>
    <property type="project" value="CACAO"/>
</dbReference>
<dbReference type="GO" id="GO:0009401">
    <property type="term" value="P:phosphoenolpyruvate-dependent sugar phosphotransferase system"/>
    <property type="evidence" value="ECO:0000314"/>
    <property type="project" value="EcoCyc"/>
</dbReference>
<dbReference type="GO" id="GO:0006355">
    <property type="term" value="P:regulation of DNA-templated transcription"/>
    <property type="evidence" value="ECO:0000314"/>
    <property type="project" value="EcoCyc"/>
</dbReference>
<dbReference type="CDD" id="cd00212">
    <property type="entry name" value="PTS_IIB_glc"/>
    <property type="match status" value="1"/>
</dbReference>
<dbReference type="FunFam" id="3.30.1360.60:FF:000001">
    <property type="entry name" value="PTS system glucose-specific IIBC component PtsG"/>
    <property type="match status" value="1"/>
</dbReference>
<dbReference type="Gene3D" id="3.30.1360.60">
    <property type="entry name" value="Glucose permease domain IIB"/>
    <property type="match status" value="1"/>
</dbReference>
<dbReference type="InterPro" id="IPR036878">
    <property type="entry name" value="Glu_permease_IIB"/>
</dbReference>
<dbReference type="InterPro" id="IPR018113">
    <property type="entry name" value="PTrfase_EIIB_Cys"/>
</dbReference>
<dbReference type="InterPro" id="IPR003352">
    <property type="entry name" value="PTS_EIIC"/>
</dbReference>
<dbReference type="InterPro" id="IPR013013">
    <property type="entry name" value="PTS_EIIC_1"/>
</dbReference>
<dbReference type="InterPro" id="IPR050429">
    <property type="entry name" value="PTS_Glucose_EIICBA"/>
</dbReference>
<dbReference type="InterPro" id="IPR001996">
    <property type="entry name" value="PTS_IIB_1"/>
</dbReference>
<dbReference type="InterPro" id="IPR011299">
    <property type="entry name" value="PTS_IIBC_glc"/>
</dbReference>
<dbReference type="InterPro" id="IPR004719">
    <property type="entry name" value="PTS_maltose/Glc_sub_IIC"/>
</dbReference>
<dbReference type="NCBIfam" id="TIGR00826">
    <property type="entry name" value="EIIB_glc"/>
    <property type="match status" value="1"/>
</dbReference>
<dbReference type="NCBIfam" id="NF008301">
    <property type="entry name" value="PRK11089.1"/>
    <property type="match status" value="1"/>
</dbReference>
<dbReference type="NCBIfam" id="TIGR00852">
    <property type="entry name" value="pts-Glc"/>
    <property type="match status" value="1"/>
</dbReference>
<dbReference type="NCBIfam" id="TIGR02002">
    <property type="entry name" value="PTS-II-BC-glcB"/>
    <property type="match status" value="1"/>
</dbReference>
<dbReference type="PANTHER" id="PTHR30009">
    <property type="entry name" value="CYTOCHROME C-TYPE SYNTHESIS PROTEIN AND PTS TRANSMEMBRANE COMPONENT"/>
    <property type="match status" value="1"/>
</dbReference>
<dbReference type="PANTHER" id="PTHR30009:SF20">
    <property type="entry name" value="PTS SYSTEM GLUCOSE-SPECIFIC EIICB COMPONENT-RELATED"/>
    <property type="match status" value="1"/>
</dbReference>
<dbReference type="Pfam" id="PF00367">
    <property type="entry name" value="PTS_EIIB"/>
    <property type="match status" value="1"/>
</dbReference>
<dbReference type="Pfam" id="PF02378">
    <property type="entry name" value="PTS_EIIC"/>
    <property type="match status" value="1"/>
</dbReference>
<dbReference type="SUPFAM" id="SSF55604">
    <property type="entry name" value="Glucose permease domain IIB"/>
    <property type="match status" value="1"/>
</dbReference>
<dbReference type="PROSITE" id="PS51098">
    <property type="entry name" value="PTS_EIIB_TYPE_1"/>
    <property type="match status" value="1"/>
</dbReference>
<dbReference type="PROSITE" id="PS01035">
    <property type="entry name" value="PTS_EIIB_TYPE_1_CYS"/>
    <property type="match status" value="1"/>
</dbReference>
<dbReference type="PROSITE" id="PS51103">
    <property type="entry name" value="PTS_EIIC_TYPE_1"/>
    <property type="match status" value="1"/>
</dbReference>
<feature type="chain" id="PRO_0000186528" description="PTS system glucose-specific EIICB component">
    <location>
        <begin position="1"/>
        <end position="477"/>
    </location>
</feature>
<feature type="topological domain" description="Cytoplasmic" evidence="1">
    <location>
        <begin position="1"/>
        <end position="14"/>
    </location>
</feature>
<feature type="transmembrane region" description="Helical" evidence="3">
    <location>
        <begin position="15"/>
        <end position="35"/>
    </location>
</feature>
<feature type="topological domain" description="Periplasmic" evidence="1">
    <location>
        <begin position="36"/>
        <end position="50"/>
    </location>
</feature>
<feature type="transmembrane region" description="Helical" evidence="3">
    <location>
        <begin position="51"/>
        <end position="71"/>
    </location>
</feature>
<feature type="topological domain" description="Cytoplasmic" evidence="1">
    <location>
        <begin position="72"/>
        <end position="79"/>
    </location>
</feature>
<feature type="transmembrane region" description="Helical" evidence="3">
    <location>
        <begin position="80"/>
        <end position="100"/>
    </location>
</feature>
<feature type="topological domain" description="Periplasmic" evidence="1">
    <location>
        <begin position="101"/>
        <end position="111"/>
    </location>
</feature>
<feature type="transmembrane region" description="Helical" evidence="3">
    <location>
        <begin position="112"/>
        <end position="132"/>
    </location>
</feature>
<feature type="topological domain" description="Cytoplasmic" evidence="1">
    <location>
        <begin position="133"/>
        <end position="151"/>
    </location>
</feature>
<feature type="transmembrane region" description="Helical" evidence="3">
    <location>
        <begin position="152"/>
        <end position="172"/>
    </location>
</feature>
<feature type="topological domain" description="Periplasmic" evidence="1">
    <location>
        <begin position="173"/>
        <end position="190"/>
    </location>
</feature>
<feature type="transmembrane region" description="Helical" evidence="3">
    <location>
        <begin position="191"/>
        <end position="211"/>
    </location>
</feature>
<feature type="topological domain" description="Cytoplasmic" evidence="1">
    <location>
        <begin position="212"/>
        <end position="249"/>
    </location>
</feature>
<feature type="transmembrane region" description="Helical" evidence="3">
    <location>
        <begin position="250"/>
        <end position="270"/>
    </location>
</feature>
<feature type="topological domain" description="Periplasmic" evidence="1">
    <location>
        <begin position="271"/>
        <end position="279"/>
    </location>
</feature>
<feature type="transmembrane region" description="Helical" evidence="3">
    <location>
        <begin position="280"/>
        <end position="300"/>
    </location>
</feature>
<feature type="topological domain" description="Cytoplasmic" evidence="1">
    <location>
        <begin position="301"/>
        <end position="309"/>
    </location>
</feature>
<feature type="transmembrane region" description="Helical" evidence="3">
    <location>
        <begin position="310"/>
        <end position="330"/>
    </location>
</feature>
<feature type="topological domain" description="Periplasmic" evidence="1">
    <location>
        <begin position="331"/>
        <end position="355"/>
    </location>
</feature>
<feature type="transmembrane region" description="Helical" evidence="3">
    <location>
        <begin position="356"/>
        <end position="376"/>
    </location>
</feature>
<feature type="topological domain" description="Cytoplasmic" evidence="10">
    <location>
        <begin position="377"/>
        <end position="477"/>
    </location>
</feature>
<feature type="domain" description="PTS EIIC type-1" evidence="3">
    <location>
        <begin position="1"/>
        <end position="388"/>
    </location>
</feature>
<feature type="domain" description="PTS EIIB type-1" evidence="2">
    <location>
        <begin position="399"/>
        <end position="477"/>
    </location>
</feature>
<feature type="active site" description="Phosphocysteine intermediate; for EIIB activity" evidence="2 20 22 25">
    <location>
        <position position="421"/>
    </location>
</feature>
<feature type="modified residue" description="Phosphocysteine" evidence="16">
    <location>
        <position position="421"/>
    </location>
</feature>
<feature type="mutagenesis site" description="Destabilizes the protein structure; when associated with S-326." evidence="15">
    <original>C</original>
    <variation>S</variation>
    <location>
        <position position="204"/>
    </location>
</feature>
<feature type="mutagenesis site" description="Destabilizes the protein structure; when associated with S-204." evidence="15">
    <original>C</original>
    <variation>S</variation>
    <location>
        <position position="326"/>
    </location>
</feature>
<feature type="mutagenesis site" description="Still allows binding to Mlc." evidence="7">
    <original>D</original>
    <variation>A</variation>
    <location>
        <position position="419"/>
    </location>
</feature>
<feature type="mutagenesis site" description="Still allows binding to Mlc. Derepression of Mlc targets becomes constitutive, i.e. independent of PTS phosphorylation." evidence="7">
    <original>C</original>
    <variation>D</variation>
    <location>
        <position position="421"/>
    </location>
</feature>
<feature type="mutagenesis site" description="Unable to be phosphorylated and to catalyze the phosphoryl exchange between glucose and glucose 6-phosphate at equilibrium. Remains susceptible to CdiA toxin from E.coli strain 3006. Still allows binding to Mlc. Derepression of Mlc targets becomes constitutive, i.e. independent of PTS phosphorylation." evidence="7 13 15">
    <original>C</original>
    <variation>S</variation>
    <location>
        <position position="421"/>
    </location>
</feature>
<feature type="mutagenesis site" description="Still allows binding to Mlc." evidence="7">
    <original>I</original>
    <variation>A</variation>
    <location>
        <position position="422"/>
    </location>
</feature>
<feature type="mutagenesis site" description="Decreases Mlc binding." evidence="7">
    <original>T</original>
    <variation>A</variation>
    <location>
        <position position="423"/>
    </location>
</feature>
<feature type="mutagenesis site" description="Cannot bind Mlc. Destroys the ability of Cys-421 to be phosphorylated in vitro." evidence="7">
    <original>R</original>
    <variation>A</variation>
    <variation>H</variation>
    <location>
        <position position="424"/>
    </location>
</feature>
<feature type="mutagenesis site" description="Cannot bind Mlc. Cys-421 can be phosphorylated in vitro." evidence="7">
    <original>R</original>
    <variation>K</variation>
    <location>
        <position position="424"/>
    </location>
</feature>
<feature type="mutagenesis site" description="Still allows binding to Mlc. Cys-421 is weakly phosphorylated in vitro." evidence="7">
    <original>R</original>
    <variation>A</variation>
    <location>
        <position position="426"/>
    </location>
</feature>
<feature type="mutagenesis site" description="Interaction with Mlc is hardly detectable." evidence="12">
    <original>V</original>
    <variation>Q</variation>
    <location>
        <position position="449"/>
    </location>
</feature>
<feature type="mutagenesis site" description="The complex with Mlc shows much weaker association than the wild-type." evidence="12">
    <original>A</original>
    <variation>F</variation>
    <location>
        <position position="451"/>
    </location>
</feature>
<feature type="mutagenesis site" description="Decreases Mlc binding. Interaction with Mlc is hardly detectable." evidence="7 12">
    <original>Q</original>
    <variation>A</variation>
    <location>
        <position position="456"/>
    </location>
</feature>
<feature type="mutagenesis site" description="Still allows binding to Mlc." evidence="7">
    <original>I</original>
    <variation>A</variation>
    <location>
        <position position="458"/>
    </location>
</feature>
<feature type="helix" evidence="27">
    <location>
        <begin position="5"/>
        <end position="21"/>
    </location>
</feature>
<feature type="helix" evidence="27">
    <location>
        <begin position="23"/>
        <end position="35"/>
    </location>
</feature>
<feature type="strand" evidence="28">
    <location>
        <begin position="38"/>
        <end position="40"/>
    </location>
</feature>
<feature type="helix" evidence="27">
    <location>
        <begin position="42"/>
        <end position="57"/>
    </location>
</feature>
<feature type="helix" evidence="27">
    <location>
        <begin position="59"/>
        <end position="70"/>
    </location>
</feature>
<feature type="turn" evidence="27">
    <location>
        <begin position="71"/>
        <end position="73"/>
    </location>
</feature>
<feature type="helix" evidence="27">
    <location>
        <begin position="76"/>
        <end position="101"/>
    </location>
</feature>
<feature type="helix" evidence="27">
    <location>
        <begin position="105"/>
        <end position="111"/>
    </location>
</feature>
<feature type="helix" evidence="27">
    <location>
        <begin position="118"/>
        <end position="135"/>
    </location>
</feature>
<feature type="helix" evidence="27">
    <location>
        <begin position="142"/>
        <end position="144"/>
    </location>
</feature>
<feature type="turn" evidence="27">
    <location>
        <begin position="145"/>
        <end position="147"/>
    </location>
</feature>
<feature type="helix" evidence="27">
    <location>
        <begin position="149"/>
        <end position="151"/>
    </location>
</feature>
<feature type="helix" evidence="27">
    <location>
        <begin position="153"/>
        <end position="188"/>
    </location>
</feature>
<feature type="helix" evidence="27">
    <location>
        <begin position="191"/>
        <end position="205"/>
    </location>
</feature>
<feature type="helix" evidence="27">
    <location>
        <begin position="206"/>
        <end position="208"/>
    </location>
</feature>
<feature type="helix" evidence="27">
    <location>
        <begin position="211"/>
        <end position="220"/>
    </location>
</feature>
<feature type="helix" evidence="27">
    <location>
        <begin position="236"/>
        <end position="242"/>
    </location>
</feature>
<feature type="helix" evidence="27">
    <location>
        <begin position="249"/>
        <end position="251"/>
    </location>
</feature>
<feature type="helix" evidence="27">
    <location>
        <begin position="252"/>
        <end position="257"/>
    </location>
</feature>
<feature type="helix" evidence="27">
    <location>
        <begin position="260"/>
        <end position="271"/>
    </location>
</feature>
<feature type="helix" evidence="27">
    <location>
        <begin position="274"/>
        <end position="276"/>
    </location>
</feature>
<feature type="helix" evidence="27">
    <location>
        <begin position="278"/>
        <end position="293"/>
    </location>
</feature>
<feature type="helix" evidence="27">
    <location>
        <begin position="298"/>
        <end position="301"/>
    </location>
</feature>
<feature type="turn" evidence="27">
    <location>
        <begin position="305"/>
        <end position="307"/>
    </location>
</feature>
<feature type="helix" evidence="27">
    <location>
        <begin position="309"/>
        <end position="329"/>
    </location>
</feature>
<feature type="strand" evidence="27">
    <location>
        <begin position="336"/>
        <end position="338"/>
    </location>
</feature>
<feature type="helix" evidence="27">
    <location>
        <begin position="341"/>
        <end position="346"/>
    </location>
</feature>
<feature type="helix" evidence="27">
    <location>
        <begin position="348"/>
        <end position="350"/>
    </location>
</feature>
<feature type="helix" evidence="27">
    <location>
        <begin position="356"/>
        <end position="379"/>
    </location>
</feature>
<feature type="helix" evidence="26">
    <location>
        <begin position="401"/>
        <end position="408"/>
    </location>
</feature>
<feature type="helix" evidence="26">
    <location>
        <begin position="412"/>
        <end position="414"/>
    </location>
</feature>
<feature type="strand" evidence="26">
    <location>
        <begin position="415"/>
        <end position="420"/>
    </location>
</feature>
<feature type="strand" evidence="26">
    <location>
        <begin position="422"/>
        <end position="430"/>
    </location>
</feature>
<feature type="helix" evidence="26">
    <location>
        <begin position="432"/>
        <end position="434"/>
    </location>
</feature>
<feature type="helix" evidence="26">
    <location>
        <begin position="437"/>
        <end position="442"/>
    </location>
</feature>
<feature type="strand" evidence="26">
    <location>
        <begin position="446"/>
        <end position="451"/>
    </location>
</feature>
<feature type="strand" evidence="26">
    <location>
        <begin position="454"/>
        <end position="458"/>
    </location>
</feature>
<feature type="helix" evidence="26">
    <location>
        <begin position="460"/>
        <end position="462"/>
    </location>
</feature>
<feature type="helix" evidence="26">
    <location>
        <begin position="463"/>
        <end position="475"/>
    </location>
</feature>
<reference key="1">
    <citation type="journal article" date="1986" name="J. Biol. Chem.">
        <title>Glucose permease of the bacterial phosphotransferase system. Gene cloning, overproduction, and amino acid sequence of enzyme IIGlc.</title>
        <authorList>
            <person name="Erni B."/>
            <person name="Zanolari B."/>
        </authorList>
    </citation>
    <scope>NUCLEOTIDE SEQUENCE [GENOMIC DNA]</scope>
    <scope>PROTEIN SEQUENCE OF 1-16</scope>
    <scope>SUBUNIT</scope>
    <source>
        <strain>K12</strain>
    </source>
</reference>
<reference key="2">
    <citation type="journal article" date="1996" name="DNA Res.">
        <title>A 718-kb DNA sequence of the Escherichia coli K-12 genome corresponding to the 12.7-28.0 min region on the linkage map.</title>
        <authorList>
            <person name="Oshima T."/>
            <person name="Aiba H."/>
            <person name="Baba T."/>
            <person name="Fujita K."/>
            <person name="Hayashi K."/>
            <person name="Honjo A."/>
            <person name="Ikemoto K."/>
            <person name="Inada T."/>
            <person name="Itoh T."/>
            <person name="Kajihara M."/>
            <person name="Kanai K."/>
            <person name="Kashimoto K."/>
            <person name="Kimura S."/>
            <person name="Kitagawa M."/>
            <person name="Makino K."/>
            <person name="Masuda S."/>
            <person name="Miki T."/>
            <person name="Mizobuchi K."/>
            <person name="Mori H."/>
            <person name="Motomura K."/>
            <person name="Nakamura Y."/>
            <person name="Nashimoto H."/>
            <person name="Nishio Y."/>
            <person name="Saito N."/>
            <person name="Sampei G."/>
            <person name="Seki Y."/>
            <person name="Tagami H."/>
            <person name="Takemoto K."/>
            <person name="Wada C."/>
            <person name="Yamamoto Y."/>
            <person name="Yano M."/>
            <person name="Horiuchi T."/>
        </authorList>
    </citation>
    <scope>NUCLEOTIDE SEQUENCE [LARGE SCALE GENOMIC DNA]</scope>
    <source>
        <strain>K12 / W3110 / ATCC 27325 / DSM 5911</strain>
    </source>
</reference>
<reference key="3">
    <citation type="journal article" date="1997" name="Science">
        <title>The complete genome sequence of Escherichia coli K-12.</title>
        <authorList>
            <person name="Blattner F.R."/>
            <person name="Plunkett G. III"/>
            <person name="Bloch C.A."/>
            <person name="Perna N.T."/>
            <person name="Burland V."/>
            <person name="Riley M."/>
            <person name="Collado-Vides J."/>
            <person name="Glasner J.D."/>
            <person name="Rode C.K."/>
            <person name="Mayhew G.F."/>
            <person name="Gregor J."/>
            <person name="Davis N.W."/>
            <person name="Kirkpatrick H.A."/>
            <person name="Goeden M.A."/>
            <person name="Rose D.J."/>
            <person name="Mau B."/>
            <person name="Shao Y."/>
        </authorList>
    </citation>
    <scope>NUCLEOTIDE SEQUENCE [LARGE SCALE GENOMIC DNA]</scope>
    <source>
        <strain>K12 / MG1655 / ATCC 47076</strain>
    </source>
</reference>
<reference key="4">
    <citation type="journal article" date="2006" name="Mol. Syst. Biol.">
        <title>Highly accurate genome sequences of Escherichia coli K-12 strains MG1655 and W3110.</title>
        <authorList>
            <person name="Hayashi K."/>
            <person name="Morooka N."/>
            <person name="Yamamoto Y."/>
            <person name="Fujita K."/>
            <person name="Isono K."/>
            <person name="Choi S."/>
            <person name="Ohtsubo E."/>
            <person name="Baba T."/>
            <person name="Wanner B.L."/>
            <person name="Mori H."/>
            <person name="Horiuchi T."/>
        </authorList>
    </citation>
    <scope>NUCLEOTIDE SEQUENCE [LARGE SCALE GENOMIC DNA]</scope>
    <source>
        <strain>K12 / W3110 / ATCC 27325 / DSM 5911</strain>
    </source>
</reference>
<reference key="5">
    <citation type="journal article" date="1988" name="J. Biol. Chem.">
        <title>Glucose permease of Escherichia coli. The effect of cysteine to serine mutations on the function, stability, and regulation of transport and phosphorylation.</title>
        <authorList>
            <person name="Nuoffer C."/>
            <person name="Zanolari B."/>
            <person name="Erni B."/>
        </authorList>
    </citation>
    <scope>FUNCTION</scope>
    <scope>CATALYTIC ACTIVITY</scope>
    <scope>MUTAGENESIS OF CYS-204; CYS-326 AND CYS-421</scope>
    <scope>SUBCELLULAR LOCATION</scope>
    <scope>ACTIVE SITE</scope>
</reference>
<reference key="6">
    <citation type="journal article" date="1993" name="J. Biol. Chem.">
        <title>Cysteine phosphorylation of the glucose transporter of Escherichia coli.</title>
        <authorList>
            <person name="Meins M."/>
            <person name="Jenoe P."/>
            <person name="Mueller D."/>
            <person name="Richter W.J."/>
            <person name="Rosenbusch J.P."/>
            <person name="Erni B."/>
        </authorList>
    </citation>
    <scope>PHOSPHORYLATION AT CYS-421</scope>
</reference>
<reference key="7">
    <citation type="journal article" date="1997" name="Electrophoresis">
        <title>Escherichia coli proteome analysis using the gene-protein database.</title>
        <authorList>
            <person name="VanBogelen R.A."/>
            <person name="Abshire K.Z."/>
            <person name="Moldover B."/>
            <person name="Olson E.R."/>
            <person name="Neidhardt F.C."/>
        </authorList>
    </citation>
    <scope>IDENTIFICATION BY 2D-GEL</scope>
</reference>
<reference key="8">
    <citation type="journal article" date="1998" name="Mol. Microbiol.">
        <title>A global repressor (Mlc) is involved in glucose induction of the ptsG gene encoding major glucose transporter in Escherichia coli.</title>
        <authorList>
            <person name="Kimata K."/>
            <person name="Inada T."/>
            <person name="Tagami H."/>
            <person name="Aiba H."/>
        </authorList>
    </citation>
    <scope>TRANSCRIPTIONAL REGULATION</scope>
    <source>
        <strain>K12</strain>
    </source>
</reference>
<reference key="9">
    <citation type="journal article" date="1999" name="Arch. Biochem. Biophys.">
        <title>Purification and electron microscopic characterization of the membrane subunit (IICB(Glc)) of the Escherichia coli glucose transporter.</title>
        <authorList>
            <person name="Zhuang J."/>
            <person name="Gutknecht R."/>
            <person name="Fluekiger K."/>
            <person name="Hasler L."/>
            <person name="Erni B."/>
            <person name="Engel A."/>
        </authorList>
    </citation>
    <scope>FUNCTION</scope>
    <scope>SUBUNIT</scope>
</reference>
<reference key="10">
    <citation type="journal article" date="2000" name="EMBO J.">
        <title>Signal transduction between a membrane-bound transporter, PtsG, and a soluble transcription factor, Mlc, of Escherichia coli.</title>
        <authorList>
            <person name="Lee S.J."/>
            <person name="Boos W."/>
            <person name="Bouche J.P."/>
            <person name="Plumbridge J."/>
        </authorList>
    </citation>
    <scope>FUNCTION OF DEPHOSPHORYLATED FORM</scope>
    <scope>INTERACTION WITH MLC</scope>
    <scope>DOMAIN</scope>
</reference>
<reference key="11">
    <citation type="journal article" date="2001" name="EMBO J.">
        <title>The Escherichia coli glucose transporter enzyme IICB(Glc) recruits the global repressor Mlc.</title>
        <authorList>
            <person name="Nam T.W."/>
            <person name="Cho S.H."/>
            <person name="Shin D."/>
            <person name="Kim J.H."/>
            <person name="Jeong J.Y."/>
            <person name="Lee J.H."/>
            <person name="Roe J.H."/>
            <person name="Peterkofsky A."/>
            <person name="Kang S.O."/>
            <person name="Ryu S."/>
            <person name="Seok Y.J."/>
        </authorList>
    </citation>
    <scope>FUNCTION OF DEPHOSPHORYLATED FORM</scope>
    <scope>INTERACTION WITH MLC</scope>
    <scope>DOMAIN</scope>
</reference>
<reference key="12">
    <citation type="journal article" date="2003" name="J. Biol. Chem.">
        <title>Analysis of the interaction between the global regulator Mlc and EIIBGlc of the glucose-specific phosphotransferase system in Escherichia coli.</title>
        <authorList>
            <person name="Seitz S."/>
            <person name="Lee S.J."/>
            <person name="Pennetier C."/>
            <person name="Boos W."/>
            <person name="Plumbridge J."/>
        </authorList>
    </citation>
    <scope>FUNCTION</scope>
    <scope>INTERACTION WITH MLC</scope>
    <scope>DOMAIN</scope>
    <scope>MUTAGENESIS OF ASP-419; CYS-421; ILE-422; THR-423; ARG-424; ARG-426; GLN-456 AND ILE-458</scope>
</reference>
<reference key="13">
    <citation type="journal article" date="2004" name="Mol. Microbiol.">
        <title>Involvement of a novel transcriptional activator and small RNA in post-transcriptional regulation of the glucose phosphoenolpyruvate phosphotransferase system.</title>
        <authorList>
            <person name="Vanderpool C.K."/>
            <person name="Gottesman S."/>
        </authorList>
    </citation>
    <scope>INDUCTION BY POST-TRANSCRIPTIONAL RNA REGULATION</scope>
    <source>
        <strain>K12 / MG1655 / ATCC 47076</strain>
    </source>
</reference>
<reference key="14">
    <citation type="journal article" date="2005" name="Science">
        <title>Global topology analysis of the Escherichia coli inner membrane proteome.</title>
        <authorList>
            <person name="Daley D.O."/>
            <person name="Rapp M."/>
            <person name="Granseth E."/>
            <person name="Melen K."/>
            <person name="Drew D."/>
            <person name="von Heijne G."/>
        </authorList>
    </citation>
    <scope>TOPOLOGY [LARGE SCALE ANALYSIS]</scope>
    <scope>SUBCELLULAR LOCATION</scope>
    <source>
        <strain>K12 / MG1655 / ATCC 47076</strain>
    </source>
</reference>
<reference key="15">
    <citation type="journal article" date="2006" name="Proc. Natl. Acad. Sci. U.S.A.">
        <title>Translational repression is sufficient for gene silencing by bacterial small noncoding RNAs in the absence of mRNA destruction.</title>
        <authorList>
            <person name="Morita T."/>
            <person name="Mochizuki Y."/>
            <person name="Aiba H."/>
        </authorList>
    </citation>
    <scope>ACTIVITY REGULATION</scope>
    <scope>INDUCTION</scope>
    <source>
        <strain>K12 / W3110 / ATCC 27325 / DSM 5911</strain>
    </source>
</reference>
<reference key="16">
    <citation type="journal article" date="2015" name="Proc. Natl. Acad. Sci. U.S.A.">
        <title>Contact-dependent growth inhibition toxins exploit multiple independent cell-entry pathways.</title>
        <authorList>
            <person name="Willett J.L."/>
            <person name="Gucinski G.C."/>
            <person name="Fatherree J.P."/>
            <person name="Low D.A."/>
            <person name="Hayes C.S."/>
        </authorList>
    </citation>
    <scope>RECEPTOR FOR CDI TOXIN ENTRY INTO TARGET CELL CYTOPLASM (MICROBIAL INFECTION)</scope>
    <scope>DISRUPTION PHENOTYPE</scope>
    <scope>MUTAGENESIS OF CYS-421</scope>
    <source>
        <strain>K12 / MC4100 / ATCC 35695 / DSM 6574</strain>
    </source>
</reference>
<reference key="17">
    <citation type="journal article" date="2017" name="MBio">
        <title>CdiA effectors use modular receptor-binding domains to recognize target bacteria.</title>
        <authorList>
            <person name="Ruhe Z.C."/>
            <person name="Nguyen J.Y."/>
            <person name="Xiong J."/>
            <person name="Koskiniemi S."/>
            <person name="Beck C.M."/>
            <person name="Perkins B.R."/>
            <person name="Low D.A."/>
            <person name="Hayes C.S."/>
        </authorList>
    </citation>
    <scope>RECEPTOR FOR CDI TOXIN ENTRY INTO TARGET CELL CYTOPLASM (MICROBIAL INFECTION)</scope>
    <scope>DISRUPTION PHENOTYPE</scope>
    <source>
        <strain>EPI100</strain>
    </source>
</reference>
<reference key="18">
    <citation type="journal article" date="1994" name="Eur. J. Biochem.">
        <title>The glucose transporter of Escherichia coli. Assignment of the 1H, 13C and 15N resonances and identification of the secondary structure of the soluble IIB domain.</title>
        <authorList>
            <person name="Golic Grdadolnik S."/>
            <person name="Eberstadt M."/>
            <person name="Gemmecker G."/>
            <person name="Kessler H."/>
            <person name="Buhr A."/>
            <person name="Erni B."/>
        </authorList>
    </citation>
    <scope>STRUCTURE BY NMR OF 391-476</scope>
</reference>
<reference key="19">
    <citation type="journal article" date="1996" name="Biochemistry">
        <title>Solution structure of the IIB domain of the glucose transporter of Escherichia coli.</title>
        <authorList>
            <person name="Eberstadt M."/>
            <person name="Golic Grdadolnik S."/>
            <person name="Gemmecker G."/>
            <person name="Kessler H."/>
            <person name="Buhr A."/>
            <person name="Erni B."/>
        </authorList>
    </citation>
    <scope>STRUCTURE BY NMR OF 386-477</scope>
</reference>
<reference key="20">
    <citation type="journal article" date="1997" name="Biochemistry">
        <title>Glucose transporter of Escherichia coli: NMR characterization of the phosphocysteine form of the IIB(Glc) domain and its binding interface with the IIA(Glc) subunit.</title>
        <authorList>
            <person name="Gemmecker G."/>
            <person name="Eberstadt M."/>
            <person name="Buhr A."/>
            <person name="Lanz R."/>
            <person name="Golic Grdadolnik S."/>
            <person name="Kessler H."/>
            <person name="Erni B."/>
        </authorList>
    </citation>
    <scope>STRUCTURE BY NMR OF 386-477</scope>
</reference>
<reference key="21">
    <citation type="journal article" date="2003" name="J. Biol. Chem.">
        <title>Solution structure of the phosphoryl transfer complex between the signal-transducing protein IIAGlucose and the cytoplasmic domain of the glucose transporter IICBGlucose of the Escherichia coli glucose phosphotransferase system.</title>
        <authorList>
            <person name="Cai M."/>
            <person name="Williams D.C. Jr."/>
            <person name="Wang G."/>
            <person name="Lee B.R."/>
            <person name="Peterkofsky A."/>
            <person name="Clore G.M."/>
        </authorList>
    </citation>
    <scope>STRUCTURE BY NMR OF 387-476</scope>
    <scope>ACTIVE SITE</scope>
    <scope>SUBUNIT</scope>
    <scope>REACTION MECHANISM</scope>
</reference>
<reference key="22">
    <citation type="journal article" date="2008" name="Proc. Natl. Acad. Sci. U.S.A.">
        <title>Analyses of Mlc-IIBGlc interaction and a plausible molecular mechanism of Mlc inactivation by membrane sequestration.</title>
        <authorList>
            <person name="Nam T.W."/>
            <person name="Jung H.I."/>
            <person name="An Y.J."/>
            <person name="Park Y.H."/>
            <person name="Lee S.H."/>
            <person name="Seok Y.J."/>
            <person name="Cha S.S."/>
        </authorList>
    </citation>
    <scope>X-RAY CRYSTALLOGRAPHY (1.65 ANGSTROMS) OF 396-477 IN COMPLEX WITH MLC</scope>
    <scope>FUNCTION</scope>
    <scope>ACTIVE SITE</scope>
    <scope>SUBUNIT</scope>
    <scope>INTERACTION WITH MLC</scope>
    <scope>MUTAGENESIS OF VAL-449; ALA-451 AND GLN-456</scope>
</reference>
<gene>
    <name type="primary">ptsG</name>
    <name type="synonym">glcA</name>
    <name type="synonym">umg</name>
    <name type="ordered locus">b1101</name>
    <name type="ordered locus">JW1087</name>
</gene>
<sequence>MFKNAFANLQKVGKSLMLPVSVLPIAGILLGVGSANFSWLPAVVSHVMAEAGGSVFANMPLIFAIGVALGFTNNDGVSALAAVVAYGIMVKTMAVVAPLVLHLPAEEIASKHLADTGVLGGIISGAIAAYMFNRFYRIKLPEYLGFFAGKRFVPIISGLAAIFTGVVLSFIWPPIGSAIQTFSQWAAYQNPVVAFGIYGFIERCLVPFGLHHIWNVPFQMQIGEYTNAAGQVFHGDIPRYMAGDPTAGKLSGGFLFKMYGLPAAAIAIWHSAKPENRAKVGGIMISAALTSFLTGITEPIEFSFMFVAPILYIIHAILAGLAFPICILLGMRDGTSFSHGLIDFIVLSGNSSKLWLFPIVGIGYAIVYYTIFRVLIKALDLKTPGREDATEDAKATGTSEMAPALVAAFGGKENITNLDACITRLRVSVADVSKVDQAGLKKLGAAGVVVAGSGVQAIFGTKSDNLKTEMDEYIRNH</sequence>
<name>PTGCB_ECOLI</name>